<accession>P24616</accession>
<accession>Q77KZ9</accession>
<accession>Q8V690</accession>
<organism>
    <name type="scientific">Bovine respiratory syncytial virus (strain A51908)</name>
    <name type="common">BRS</name>
    <dbReference type="NCBI Taxonomy" id="11247"/>
    <lineage>
        <taxon>Viruses</taxon>
        <taxon>Riboviria</taxon>
        <taxon>Orthornavirae</taxon>
        <taxon>Negarnaviricota</taxon>
        <taxon>Haploviricotina</taxon>
        <taxon>Monjiviricetes</taxon>
        <taxon>Mononegavirales</taxon>
        <taxon>Pneumoviridae</taxon>
        <taxon>Orthopneumovirus</taxon>
        <taxon>Orthopneumovirus bovis</taxon>
        <taxon>bovine respiratory syncytial virus</taxon>
    </lineage>
</organism>
<proteinExistence type="inferred from homology"/>
<keyword id="KW-0325">Glycoprotein</keyword>
<keyword id="KW-1032">Host cell membrane</keyword>
<keyword id="KW-1038">Host endoplasmic reticulum</keyword>
<keyword id="KW-1040">Host Golgi apparatus</keyword>
<keyword id="KW-1043">Host membrane</keyword>
<keyword id="KW-0375">Hydrogen ion transport</keyword>
<keyword id="KW-0406">Ion transport</keyword>
<keyword id="KW-0472">Membrane</keyword>
<keyword id="KW-0597">Phosphoprotein</keyword>
<keyword id="KW-1185">Reference proteome</keyword>
<keyword id="KW-0735">Signal-anchor</keyword>
<keyword id="KW-0812">Transmembrane</keyword>
<keyword id="KW-1133">Transmembrane helix</keyword>
<keyword id="KW-0813">Transport</keyword>
<keyword id="KW-0946">Virion</keyword>
<dbReference type="EMBL" id="D01012">
    <property type="protein sequence ID" value="BAA00813.1"/>
    <property type="molecule type" value="mRNA"/>
</dbReference>
<dbReference type="EMBL" id="AF295543">
    <property type="protein sequence ID" value="AAL49397.1"/>
    <property type="molecule type" value="Genomic_RNA"/>
</dbReference>
<dbReference type="EMBL" id="AF295544">
    <property type="protein sequence ID" value="AAL49408.1"/>
    <property type="molecule type" value="Genomic_RNA"/>
</dbReference>
<dbReference type="PIR" id="JQ1179">
    <property type="entry name" value="P1NZBR"/>
</dbReference>
<dbReference type="SMR" id="P24616"/>
<dbReference type="GlyCosmos" id="P24616">
    <property type="glycosylation" value="1 site, No reported glycans"/>
</dbReference>
<dbReference type="Proteomes" id="UP000007616">
    <property type="component" value="Genome"/>
</dbReference>
<dbReference type="GO" id="GO:0044167">
    <property type="term" value="C:host cell endoplasmic reticulum membrane"/>
    <property type="evidence" value="ECO:0007669"/>
    <property type="project" value="UniProtKB-SubCell"/>
</dbReference>
<dbReference type="GO" id="GO:0044178">
    <property type="term" value="C:host cell Golgi membrane"/>
    <property type="evidence" value="ECO:0007669"/>
    <property type="project" value="UniProtKB-SubCell"/>
</dbReference>
<dbReference type="GO" id="GO:0020002">
    <property type="term" value="C:host cell plasma membrane"/>
    <property type="evidence" value="ECO:0007669"/>
    <property type="project" value="UniProtKB-SubCell"/>
</dbReference>
<dbReference type="GO" id="GO:0016020">
    <property type="term" value="C:membrane"/>
    <property type="evidence" value="ECO:0007669"/>
    <property type="project" value="UniProtKB-KW"/>
</dbReference>
<dbReference type="GO" id="GO:0055036">
    <property type="term" value="C:virion membrane"/>
    <property type="evidence" value="ECO:0007669"/>
    <property type="project" value="UniProtKB-SubCell"/>
</dbReference>
<dbReference type="GO" id="GO:1902600">
    <property type="term" value="P:proton transmembrane transport"/>
    <property type="evidence" value="ECO:0007669"/>
    <property type="project" value="UniProtKB-KW"/>
</dbReference>
<dbReference type="InterPro" id="IPR005327">
    <property type="entry name" value="SHP"/>
</dbReference>
<dbReference type="Pfam" id="PF03579">
    <property type="entry name" value="SHP"/>
    <property type="match status" value="1"/>
</dbReference>
<name>SH_BRSVA</name>
<sequence>MNNTSTMIEFTGKFWTYFTLVFMMLIIGFFFVITSLVAAILNKLCDLNDHHTNSLDIRTGLRNDTQSITRAHV</sequence>
<comment type="function">
    <text evidence="1">Viroporin that forms a homopentameric ion channel displaying low ion selectivity. May play a role in virus morphogenesis and pathogenicity at various stages of the viral life cycle. Accumulates at the membrane of the Golgi apparatus in infected cells and may facilitate virus release by modifying the secretory pathway. May enhance host membrane permeability and disrupt cellular ion homeostasis, which can be sensed as damage-associated molecular patterns/danger signals, triggering NLRP3 inflammasome activation and inflammatory immune response. Also inhibits host TNFA-mediated signaling pathway and may delay apoptosis, allowing time for the virus to replicate.</text>
</comment>
<comment type="activity regulation">
    <text evidence="1">Channel activity is inhibited by copper. Also inhibited by small-molecule pyronin B.</text>
</comment>
<comment type="subunit">
    <text evidence="1">Homopentamer forming a funnel-like pore. Interacts with glycoprotein G; this interaction occurs on the surface of virion particles and infected cells. Interacts with host BCAP31 (via C-terminus); this interaction is direct.</text>
</comment>
<comment type="subcellular location">
    <subcellularLocation>
        <location evidence="1">Virion membrane</location>
        <topology evidence="1">Single-pass type II membrane protein</topology>
    </subcellularLocation>
    <subcellularLocation>
        <location evidence="1">Host cell membrane</location>
        <topology evidence="1">Single-pass type II membrane protein</topology>
    </subcellularLocation>
    <subcellularLocation>
        <location evidence="1">Host Golgi apparatus membrane</location>
        <topology evidence="1">Single-pass type II membrane protein</topology>
    </subcellularLocation>
    <subcellularLocation>
        <location evidence="1">Host endoplasmic reticulum membrane</location>
        <topology evidence="1">Single-pass type II membrane protein</topology>
    </subcellularLocation>
    <text evidence="1">Present in very small amount in the virion. Detected in lipid rafts of host Golgi apparatus membrane.</text>
</comment>
<comment type="PTM">
    <text evidence="1">Four species of SH have been detected in infected cell cytoplasm: a 7.5 kDa non-glycosylated form (SH0), a 13-15 kDa form that contains one or two N-linked carbohydrate side chains of the high-mannose type (SHg), a 21-30 kDa polylactosaminoglycan-modified form of the protein (SHp), and the isoform generated by alternative translational initiation. Of these different forms, SH0 is by far the most abundant protein detected during virus infection.</text>
</comment>
<comment type="PTM">
    <text evidence="1">Tyrosine phosphorylated.</text>
</comment>
<comment type="similarity">
    <text evidence="3">Belongs to the orthopneumovirus small hydrophobic protein family.</text>
</comment>
<protein>
    <recommendedName>
        <fullName>Small hydrophobic protein</fullName>
    </recommendedName>
    <alternativeName>
        <fullName>Small protein 1A</fullName>
    </alternativeName>
</protein>
<gene>
    <name type="primary">SH</name>
    <name type="synonym">1A</name>
</gene>
<evidence type="ECO:0000250" key="1">
    <source>
        <dbReference type="UniProtKB" id="P0DOE5"/>
    </source>
</evidence>
<evidence type="ECO:0000255" key="2"/>
<evidence type="ECO:0000305" key="3"/>
<reference key="1">
    <citation type="journal article" date="1991" name="J. Gen. Virol.">
        <title>Nucleotide sequence analysis of a matrix and small hydrophobic protein dicistronic mRNA of bovine respiratory syncytial virus demonstrates extensive sequence divergence of the small hydrophobic protein from that of human respiratory syncytial virus.</title>
        <authorList>
            <person name="Samal S.K."/>
            <person name="Zamora M."/>
        </authorList>
    </citation>
    <scope>NUCLEOTIDE SEQUENCE [MRNA]</scope>
</reference>
<reference key="2">
    <citation type="journal article" date="2001" name="Virus Genes">
        <title>Rescue of bovine respiratory syncytial virus from cloned cDNA: entire genome sequence of BRSV strain A51908.</title>
        <authorList>
            <person name="Yunus A.S."/>
            <person name="Khattar S.K."/>
            <person name="Collins P.L."/>
            <person name="Samal S.K."/>
        </authorList>
    </citation>
    <scope>NUCLEOTIDE SEQUENCE [GENOMIC RNA]</scope>
    <source>
        <strain>A51908</strain>
        <strain>ATCC 51908</strain>
    </source>
</reference>
<organismHost>
    <name type="scientific">Bos taurus</name>
    <name type="common">Bovine</name>
    <dbReference type="NCBI Taxonomy" id="9913"/>
</organismHost>
<feature type="chain" id="PRO_0000142866" description="Small hydrophobic protein">
    <location>
        <begin position="1"/>
        <end position="73"/>
    </location>
</feature>
<feature type="topological domain" description="Intravirion" evidence="2">
    <location>
        <begin position="1"/>
        <end position="19"/>
    </location>
</feature>
<feature type="transmembrane region" description="Helical; Signal-anchor for type II membrane protein" evidence="2">
    <location>
        <begin position="20"/>
        <end position="40"/>
    </location>
</feature>
<feature type="topological domain" description="Virion surface" evidence="2">
    <location>
        <begin position="41"/>
        <end position="73"/>
    </location>
</feature>
<feature type="glycosylation site" description="N-linked (GlcNAc...) asparagine; by host" evidence="2">
    <location>
        <position position="63"/>
    </location>
</feature>
<feature type="sequence variant" description="In strain: ATCC 51908.">
    <original>M</original>
    <variation>I</variation>
    <location>
        <position position="7"/>
    </location>
</feature>
<feature type="sequence variant" description="In strain: ATCC 51908.">
    <original>K</original>
    <variation>E</variation>
    <location>
        <position position="13"/>
    </location>
</feature>
<feature type="sequence variant" description="In strain: ATCC 51908.">
    <original>V</original>
    <variation>A</variation>
    <location>
        <position position="21"/>
    </location>
</feature>
<feature type="sequence variant" description="In strain: ATCC 51908.">
    <original>I</original>
    <variation>T</variation>
    <location>
        <position position="26"/>
    </location>
</feature>
<feature type="sequence variant" description="In strain: ATCC 51908.">
    <original>VI</original>
    <variation>IV</variation>
    <location>
        <begin position="32"/>
        <end position="33"/>
    </location>
</feature>
<feature type="sequence variant">
    <original>V</original>
    <variation>A</variation>
    <location>
        <position position="32"/>
    </location>
</feature>
<feature type="sequence variant" description="In strain: ATCC 51908.">
    <original>L</original>
    <variation>F</variation>
    <location>
        <position position="47"/>
    </location>
</feature>
<feature type="sequence variant" description="In strain: ATCC 51908.">
    <original>G</original>
    <variation>R</variation>
    <location>
        <position position="60"/>
    </location>
</feature>
<feature type="sequence variant" description="In strain: ATCC 51908.">
    <original>S</original>
    <variation>L</variation>
    <location>
        <position position="67"/>
    </location>
</feature>
<feature type="sequence variant" description="In strain: ATCC 51908.">
    <original>V</original>
    <variation>E</variation>
    <location>
        <position position="73"/>
    </location>
</feature>